<protein>
    <recommendedName>
        <fullName evidence="1">Ribosomal RNA small subunit methyltransferase I</fullName>
        <ecNumber evidence="1">2.1.1.198</ecNumber>
    </recommendedName>
    <alternativeName>
        <fullName evidence="1">16S rRNA 2'-O-ribose C1402 methyltransferase</fullName>
    </alternativeName>
    <alternativeName>
        <fullName evidence="1">rRNA (cytidine-2'-O-)-methyltransferase RsmI</fullName>
    </alternativeName>
</protein>
<sequence length="287" mass="31818">MQVQKSFKDKKTSGTLYLVPTPIGNLQDMTFRAVATLKEVDFICAEDTRNTGLLLKHFDIATKQISFHEHNAYEKIPDLIDLLISGRSLAQVSDAGMPSISDPGHDLVKAAIDSDIAVVALPGASAGITALIASGLAPQPHVFYGFLPRKAGQQKAFFEDKHHYPETQMFYESPYRIKDTLTNMLACYGDRQVVLVRELTKLFEEYQRGSISEILSYLEETPLKGECLLIVAGAQADSEVELTADVDLVSLVQKEIQAGAKPNQAIKTIAKAYQVNRQELYQQFHDL</sequence>
<evidence type="ECO:0000255" key="1">
    <source>
        <dbReference type="HAMAP-Rule" id="MF_01877"/>
    </source>
</evidence>
<reference key="1">
    <citation type="journal article" date="2001" name="Proc. Natl. Acad. Sci. U.S.A.">
        <title>Complete genome sequence of an M1 strain of Streptococcus pyogenes.</title>
        <authorList>
            <person name="Ferretti J.J."/>
            <person name="McShan W.M."/>
            <person name="Ajdic D.J."/>
            <person name="Savic D.J."/>
            <person name="Savic G."/>
            <person name="Lyon K."/>
            <person name="Primeaux C."/>
            <person name="Sezate S."/>
            <person name="Suvorov A.N."/>
            <person name="Kenton S."/>
            <person name="Lai H.S."/>
            <person name="Lin S.P."/>
            <person name="Qian Y."/>
            <person name="Jia H.G."/>
            <person name="Najar F.Z."/>
            <person name="Ren Q."/>
            <person name="Zhu H."/>
            <person name="Song L."/>
            <person name="White J."/>
            <person name="Yuan X."/>
            <person name="Clifton S.W."/>
            <person name="Roe B.A."/>
            <person name="McLaughlin R.E."/>
        </authorList>
    </citation>
    <scope>NUCLEOTIDE SEQUENCE [LARGE SCALE GENOMIC DNA]</scope>
    <source>
        <strain>ATCC 700294 / SF370 / Serotype M1</strain>
    </source>
</reference>
<reference key="2">
    <citation type="journal article" date="2005" name="J. Infect. Dis.">
        <title>Evolutionary origin and emergence of a highly successful clone of serotype M1 group A Streptococcus involved multiple horizontal gene transfer events.</title>
        <authorList>
            <person name="Sumby P."/>
            <person name="Porcella S.F."/>
            <person name="Madrigal A.G."/>
            <person name="Barbian K.D."/>
            <person name="Virtaneva K."/>
            <person name="Ricklefs S.M."/>
            <person name="Sturdevant D.E."/>
            <person name="Graham M.R."/>
            <person name="Vuopio-Varkila J."/>
            <person name="Hoe N.P."/>
            <person name="Musser J.M."/>
        </authorList>
    </citation>
    <scope>NUCLEOTIDE SEQUENCE [LARGE SCALE GENOMIC DNA]</scope>
    <source>
        <strain>ATCC BAA-947 / MGAS5005 / Serotype M1</strain>
    </source>
</reference>
<feature type="chain" id="PRO_0000211954" description="Ribosomal RNA small subunit methyltransferase I">
    <location>
        <begin position="1"/>
        <end position="287"/>
    </location>
</feature>
<proteinExistence type="inferred from homology"/>
<name>RSMI_STRP1</name>
<organism>
    <name type="scientific">Streptococcus pyogenes serotype M1</name>
    <dbReference type="NCBI Taxonomy" id="301447"/>
    <lineage>
        <taxon>Bacteria</taxon>
        <taxon>Bacillati</taxon>
        <taxon>Bacillota</taxon>
        <taxon>Bacilli</taxon>
        <taxon>Lactobacillales</taxon>
        <taxon>Streptococcaceae</taxon>
        <taxon>Streptococcus</taxon>
    </lineage>
</organism>
<gene>
    <name evidence="1" type="primary">rsmI</name>
    <name type="ordered locus">SPy_0406</name>
    <name type="ordered locus">M5005_Spy0335</name>
</gene>
<accession>Q9A186</accession>
<accession>Q490L4</accession>
<comment type="function">
    <text evidence="1">Catalyzes the 2'-O-methylation of the ribose of cytidine 1402 (C1402) in 16S rRNA.</text>
</comment>
<comment type="catalytic activity">
    <reaction evidence="1">
        <text>cytidine(1402) in 16S rRNA + S-adenosyl-L-methionine = 2'-O-methylcytidine(1402) in 16S rRNA + S-adenosyl-L-homocysteine + H(+)</text>
        <dbReference type="Rhea" id="RHEA:42924"/>
        <dbReference type="Rhea" id="RHEA-COMP:10285"/>
        <dbReference type="Rhea" id="RHEA-COMP:10286"/>
        <dbReference type="ChEBI" id="CHEBI:15378"/>
        <dbReference type="ChEBI" id="CHEBI:57856"/>
        <dbReference type="ChEBI" id="CHEBI:59789"/>
        <dbReference type="ChEBI" id="CHEBI:74495"/>
        <dbReference type="ChEBI" id="CHEBI:82748"/>
        <dbReference type="EC" id="2.1.1.198"/>
    </reaction>
</comment>
<comment type="subcellular location">
    <subcellularLocation>
        <location evidence="1">Cytoplasm</location>
    </subcellularLocation>
</comment>
<comment type="similarity">
    <text evidence="1">Belongs to the methyltransferase superfamily. RsmI family.</text>
</comment>
<dbReference type="EC" id="2.1.1.198" evidence="1"/>
<dbReference type="EMBL" id="AE004092">
    <property type="protein sequence ID" value="AAK33438.1"/>
    <property type="molecule type" value="Genomic_DNA"/>
</dbReference>
<dbReference type="EMBL" id="CP000017">
    <property type="protein sequence ID" value="AAZ50954.1"/>
    <property type="molecule type" value="Genomic_DNA"/>
</dbReference>
<dbReference type="RefSeq" id="NP_268717.1">
    <property type="nucleotide sequence ID" value="NC_002737.2"/>
</dbReference>
<dbReference type="SMR" id="Q9A186"/>
<dbReference type="PaxDb" id="1314-HKU360_00372"/>
<dbReference type="KEGG" id="spy:SPy_0406"/>
<dbReference type="KEGG" id="spz:M5005_Spy0335"/>
<dbReference type="PATRIC" id="fig|160490.10.peg.347"/>
<dbReference type="HOGENOM" id="CLU_044779_1_0_9"/>
<dbReference type="OMA" id="PVVFYES"/>
<dbReference type="Proteomes" id="UP000000750">
    <property type="component" value="Chromosome"/>
</dbReference>
<dbReference type="GO" id="GO:0005737">
    <property type="term" value="C:cytoplasm"/>
    <property type="evidence" value="ECO:0007669"/>
    <property type="project" value="UniProtKB-SubCell"/>
</dbReference>
<dbReference type="GO" id="GO:0070677">
    <property type="term" value="F:rRNA (cytosine-2'-O-)-methyltransferase activity"/>
    <property type="evidence" value="ECO:0007669"/>
    <property type="project" value="UniProtKB-UniRule"/>
</dbReference>
<dbReference type="CDD" id="cd11648">
    <property type="entry name" value="RsmI"/>
    <property type="match status" value="1"/>
</dbReference>
<dbReference type="FunFam" id="3.30.950.10:FF:000002">
    <property type="entry name" value="Ribosomal RNA small subunit methyltransferase I"/>
    <property type="match status" value="1"/>
</dbReference>
<dbReference type="FunFam" id="3.40.1010.10:FF:000002">
    <property type="entry name" value="Ribosomal RNA small subunit methyltransferase I"/>
    <property type="match status" value="1"/>
</dbReference>
<dbReference type="Gene3D" id="3.40.1010.10">
    <property type="entry name" value="Cobalt-precorrin-4 Transmethylase, Domain 1"/>
    <property type="match status" value="1"/>
</dbReference>
<dbReference type="Gene3D" id="3.30.950.10">
    <property type="entry name" value="Methyltransferase, Cobalt-precorrin-4 Transmethylase, Domain 2"/>
    <property type="match status" value="1"/>
</dbReference>
<dbReference type="HAMAP" id="MF_01877">
    <property type="entry name" value="16SrRNA_methyltr_I"/>
    <property type="match status" value="1"/>
</dbReference>
<dbReference type="InterPro" id="IPR000878">
    <property type="entry name" value="4pyrrol_Mease"/>
</dbReference>
<dbReference type="InterPro" id="IPR035996">
    <property type="entry name" value="4pyrrol_Methylase_sf"/>
</dbReference>
<dbReference type="InterPro" id="IPR014777">
    <property type="entry name" value="4pyrrole_Mease_sub1"/>
</dbReference>
<dbReference type="InterPro" id="IPR014776">
    <property type="entry name" value="4pyrrole_Mease_sub2"/>
</dbReference>
<dbReference type="InterPro" id="IPR008189">
    <property type="entry name" value="rRNA_ssu_MeTfrase_I"/>
</dbReference>
<dbReference type="InterPro" id="IPR018063">
    <property type="entry name" value="SAM_MeTrfase_RsmI_CS"/>
</dbReference>
<dbReference type="NCBIfam" id="TIGR00096">
    <property type="entry name" value="16S rRNA (cytidine(1402)-2'-O)-methyltransferase"/>
    <property type="match status" value="1"/>
</dbReference>
<dbReference type="PANTHER" id="PTHR46111">
    <property type="entry name" value="RIBOSOMAL RNA SMALL SUBUNIT METHYLTRANSFERASE I"/>
    <property type="match status" value="1"/>
</dbReference>
<dbReference type="PANTHER" id="PTHR46111:SF1">
    <property type="entry name" value="RIBOSOMAL RNA SMALL SUBUNIT METHYLTRANSFERASE I"/>
    <property type="match status" value="1"/>
</dbReference>
<dbReference type="Pfam" id="PF00590">
    <property type="entry name" value="TP_methylase"/>
    <property type="match status" value="1"/>
</dbReference>
<dbReference type="PIRSF" id="PIRSF005917">
    <property type="entry name" value="MTase_YraL"/>
    <property type="match status" value="1"/>
</dbReference>
<dbReference type="SUPFAM" id="SSF53790">
    <property type="entry name" value="Tetrapyrrole methylase"/>
    <property type="match status" value="1"/>
</dbReference>
<dbReference type="PROSITE" id="PS01296">
    <property type="entry name" value="RSMI"/>
    <property type="match status" value="1"/>
</dbReference>
<keyword id="KW-0963">Cytoplasm</keyword>
<keyword id="KW-0489">Methyltransferase</keyword>
<keyword id="KW-1185">Reference proteome</keyword>
<keyword id="KW-0698">rRNA processing</keyword>
<keyword id="KW-0949">S-adenosyl-L-methionine</keyword>
<keyword id="KW-0808">Transferase</keyword>